<keyword id="KW-0012">Acyltransferase</keyword>
<keyword id="KW-0963">Cytoplasm</keyword>
<keyword id="KW-0275">Fatty acid biosynthesis</keyword>
<keyword id="KW-0276">Fatty acid metabolism</keyword>
<keyword id="KW-0444">Lipid biosynthesis</keyword>
<keyword id="KW-0443">Lipid metabolism</keyword>
<keyword id="KW-0511">Multifunctional enzyme</keyword>
<keyword id="KW-1185">Reference proteome</keyword>
<keyword id="KW-0808">Transferase</keyword>
<evidence type="ECO:0000255" key="1">
    <source>
        <dbReference type="HAMAP-Rule" id="MF_01815"/>
    </source>
</evidence>
<organism>
    <name type="scientific">Agrobacterium fabrum (strain C58 / ATCC 33970)</name>
    <name type="common">Agrobacterium tumefaciens (strain C58)</name>
    <dbReference type="NCBI Taxonomy" id="176299"/>
    <lineage>
        <taxon>Bacteria</taxon>
        <taxon>Pseudomonadati</taxon>
        <taxon>Pseudomonadota</taxon>
        <taxon>Alphaproteobacteria</taxon>
        <taxon>Hyphomicrobiales</taxon>
        <taxon>Rhizobiaceae</taxon>
        <taxon>Rhizobium/Agrobacterium group</taxon>
        <taxon>Agrobacterium</taxon>
        <taxon>Agrobacterium tumefaciens complex</taxon>
    </lineage>
</organism>
<protein>
    <recommendedName>
        <fullName evidence="1">Beta-ketoacyl-[acyl-carrier-protein] synthase III</fullName>
        <shortName evidence="1">Beta-ketoacyl-ACP synthase III</shortName>
        <shortName evidence="1">KAS III</shortName>
        <ecNumber evidence="1">2.3.1.180</ecNumber>
    </recommendedName>
    <alternativeName>
        <fullName evidence="1">3-oxoacyl-[acyl-carrier-protein] synthase 3</fullName>
    </alternativeName>
    <alternativeName>
        <fullName evidence="1">3-oxoacyl-[acyl-carrier-protein] synthase III</fullName>
    </alternativeName>
</protein>
<sequence length="323" mass="34278">MIRSIVRGFGAALPKRVMTNSEIEGVVETSDEWIVQRTGIRQRYIAGEGETTASLGEAAARAALDNAGLTPADIDLIILATSTPDNTFPATAVNIQNRLGMTHGFAFDMQAVCSGFVYAVATADLYIRGGMAKRVLVIGAETFSRILDWKDRTTCVLFGDGAGALVIEAGEGEGTSSDRGILTSQLRSDGSHKDKLYVDGGPSTTGTVGHLRMEGREVFKHAVGMITDVIEQAFEATGTTADDLDWLVPHQANKRIIDGSAKKLNIDPEKVVITVDKHGNTSAASIPLALAVAASDGRIKKGDLVMLEAMGGGFTWGAVLLRW</sequence>
<gene>
    <name evidence="1" type="primary">fabH</name>
    <name type="ordered locus">Atu1179</name>
    <name type="ORF">AGR_C_2178</name>
</gene>
<dbReference type="EC" id="2.3.1.180" evidence="1"/>
<dbReference type="EMBL" id="AE007869">
    <property type="protein sequence ID" value="AAK86983.1"/>
    <property type="molecule type" value="Genomic_DNA"/>
</dbReference>
<dbReference type="PIR" id="AI2721">
    <property type="entry name" value="AI2721"/>
</dbReference>
<dbReference type="PIR" id="F97503">
    <property type="entry name" value="F97503"/>
</dbReference>
<dbReference type="RefSeq" id="NP_354198.1">
    <property type="nucleotide sequence ID" value="NC_003062.2"/>
</dbReference>
<dbReference type="RefSeq" id="WP_010971448.1">
    <property type="nucleotide sequence ID" value="NC_003062.2"/>
</dbReference>
<dbReference type="SMR" id="Q8UG62"/>
<dbReference type="STRING" id="176299.Atu1179"/>
<dbReference type="EnsemblBacteria" id="AAK86983">
    <property type="protein sequence ID" value="AAK86983"/>
    <property type="gene ID" value="Atu1179"/>
</dbReference>
<dbReference type="GeneID" id="1133217"/>
<dbReference type="KEGG" id="atu:Atu1179"/>
<dbReference type="PATRIC" id="fig|176299.10.peg.1199"/>
<dbReference type="eggNOG" id="COG0332">
    <property type="taxonomic scope" value="Bacteria"/>
</dbReference>
<dbReference type="HOGENOM" id="CLU_039592_3_1_5"/>
<dbReference type="OrthoDB" id="9815506at2"/>
<dbReference type="PhylomeDB" id="Q8UG62"/>
<dbReference type="BioCyc" id="AGRO:ATU1179-MONOMER"/>
<dbReference type="UniPathway" id="UPA00094"/>
<dbReference type="Proteomes" id="UP000000813">
    <property type="component" value="Chromosome circular"/>
</dbReference>
<dbReference type="GO" id="GO:0005737">
    <property type="term" value="C:cytoplasm"/>
    <property type="evidence" value="ECO:0007669"/>
    <property type="project" value="UniProtKB-SubCell"/>
</dbReference>
<dbReference type="GO" id="GO:0004315">
    <property type="term" value="F:3-oxoacyl-[acyl-carrier-protein] synthase activity"/>
    <property type="evidence" value="ECO:0007669"/>
    <property type="project" value="InterPro"/>
</dbReference>
<dbReference type="GO" id="GO:0033818">
    <property type="term" value="F:beta-ketoacyl-acyl-carrier-protein synthase III activity"/>
    <property type="evidence" value="ECO:0007669"/>
    <property type="project" value="UniProtKB-UniRule"/>
</dbReference>
<dbReference type="GO" id="GO:0006633">
    <property type="term" value="P:fatty acid biosynthetic process"/>
    <property type="evidence" value="ECO:0007669"/>
    <property type="project" value="UniProtKB-UniRule"/>
</dbReference>
<dbReference type="GO" id="GO:0044550">
    <property type="term" value="P:secondary metabolite biosynthetic process"/>
    <property type="evidence" value="ECO:0007669"/>
    <property type="project" value="TreeGrafter"/>
</dbReference>
<dbReference type="CDD" id="cd00830">
    <property type="entry name" value="KAS_III"/>
    <property type="match status" value="1"/>
</dbReference>
<dbReference type="FunFam" id="3.40.47.10:FF:000004">
    <property type="entry name" value="3-oxoacyl-[acyl-carrier-protein] synthase 3"/>
    <property type="match status" value="1"/>
</dbReference>
<dbReference type="Gene3D" id="3.40.47.10">
    <property type="match status" value="1"/>
</dbReference>
<dbReference type="HAMAP" id="MF_01815">
    <property type="entry name" value="FabH"/>
    <property type="match status" value="1"/>
</dbReference>
<dbReference type="InterPro" id="IPR013747">
    <property type="entry name" value="ACP_syn_III_C"/>
</dbReference>
<dbReference type="InterPro" id="IPR013751">
    <property type="entry name" value="ACP_syn_III_N"/>
</dbReference>
<dbReference type="InterPro" id="IPR004655">
    <property type="entry name" value="FabH"/>
</dbReference>
<dbReference type="InterPro" id="IPR016039">
    <property type="entry name" value="Thiolase-like"/>
</dbReference>
<dbReference type="NCBIfam" id="TIGR00747">
    <property type="entry name" value="fabH"/>
    <property type="match status" value="1"/>
</dbReference>
<dbReference type="NCBIfam" id="NF006829">
    <property type="entry name" value="PRK09352.1"/>
    <property type="match status" value="1"/>
</dbReference>
<dbReference type="PANTHER" id="PTHR34069">
    <property type="entry name" value="3-OXOACYL-[ACYL-CARRIER-PROTEIN] SYNTHASE 3"/>
    <property type="match status" value="1"/>
</dbReference>
<dbReference type="PANTHER" id="PTHR34069:SF2">
    <property type="entry name" value="BETA-KETOACYL-[ACYL-CARRIER-PROTEIN] SYNTHASE III"/>
    <property type="match status" value="1"/>
</dbReference>
<dbReference type="Pfam" id="PF08545">
    <property type="entry name" value="ACP_syn_III"/>
    <property type="match status" value="1"/>
</dbReference>
<dbReference type="Pfam" id="PF08541">
    <property type="entry name" value="ACP_syn_III_C"/>
    <property type="match status" value="1"/>
</dbReference>
<dbReference type="SUPFAM" id="SSF53901">
    <property type="entry name" value="Thiolase-like"/>
    <property type="match status" value="1"/>
</dbReference>
<proteinExistence type="inferred from homology"/>
<comment type="function">
    <text evidence="1">Catalyzes the condensation reaction of fatty acid synthesis by the addition to an acyl acceptor of two carbons from malonyl-ACP. Catalyzes the first condensation reaction which initiates fatty acid synthesis and may therefore play a role in governing the total rate of fatty acid production. Possesses both acetoacetyl-ACP synthase and acetyl transacylase activities. Its substrate specificity determines the biosynthesis of branched-chain and/or straight-chain of fatty acids.</text>
</comment>
<comment type="catalytic activity">
    <reaction evidence="1">
        <text>malonyl-[ACP] + acetyl-CoA + H(+) = 3-oxobutanoyl-[ACP] + CO2 + CoA</text>
        <dbReference type="Rhea" id="RHEA:12080"/>
        <dbReference type="Rhea" id="RHEA-COMP:9623"/>
        <dbReference type="Rhea" id="RHEA-COMP:9625"/>
        <dbReference type="ChEBI" id="CHEBI:15378"/>
        <dbReference type="ChEBI" id="CHEBI:16526"/>
        <dbReference type="ChEBI" id="CHEBI:57287"/>
        <dbReference type="ChEBI" id="CHEBI:57288"/>
        <dbReference type="ChEBI" id="CHEBI:78449"/>
        <dbReference type="ChEBI" id="CHEBI:78450"/>
        <dbReference type="EC" id="2.3.1.180"/>
    </reaction>
</comment>
<comment type="pathway">
    <text evidence="1">Lipid metabolism; fatty acid biosynthesis.</text>
</comment>
<comment type="subunit">
    <text evidence="1">Homodimer.</text>
</comment>
<comment type="subcellular location">
    <subcellularLocation>
        <location evidence="1">Cytoplasm</location>
    </subcellularLocation>
</comment>
<comment type="domain">
    <text evidence="1">The last Arg residue of the ACP-binding site is essential for the weak association between ACP/AcpP and FabH.</text>
</comment>
<comment type="similarity">
    <text evidence="1">Belongs to the thiolase-like superfamily. FabH family.</text>
</comment>
<feature type="chain" id="PRO_0000110390" description="Beta-ketoacyl-[acyl-carrier-protein] synthase III">
    <location>
        <begin position="1"/>
        <end position="323"/>
    </location>
</feature>
<feature type="region of interest" description="ACP-binding" evidence="1">
    <location>
        <begin position="251"/>
        <end position="255"/>
    </location>
</feature>
<feature type="active site" evidence="1">
    <location>
        <position position="113"/>
    </location>
</feature>
<feature type="active site" evidence="1">
    <location>
        <position position="250"/>
    </location>
</feature>
<feature type="active site" evidence="1">
    <location>
        <position position="280"/>
    </location>
</feature>
<reference key="1">
    <citation type="journal article" date="2001" name="Science">
        <title>The genome of the natural genetic engineer Agrobacterium tumefaciens C58.</title>
        <authorList>
            <person name="Wood D.W."/>
            <person name="Setubal J.C."/>
            <person name="Kaul R."/>
            <person name="Monks D.E."/>
            <person name="Kitajima J.P."/>
            <person name="Okura V.K."/>
            <person name="Zhou Y."/>
            <person name="Chen L."/>
            <person name="Wood G.E."/>
            <person name="Almeida N.F. Jr."/>
            <person name="Woo L."/>
            <person name="Chen Y."/>
            <person name="Paulsen I.T."/>
            <person name="Eisen J.A."/>
            <person name="Karp P.D."/>
            <person name="Bovee D. Sr."/>
            <person name="Chapman P."/>
            <person name="Clendenning J."/>
            <person name="Deatherage G."/>
            <person name="Gillet W."/>
            <person name="Grant C."/>
            <person name="Kutyavin T."/>
            <person name="Levy R."/>
            <person name="Li M.-J."/>
            <person name="McClelland E."/>
            <person name="Palmieri A."/>
            <person name="Raymond C."/>
            <person name="Rouse G."/>
            <person name="Saenphimmachak C."/>
            <person name="Wu Z."/>
            <person name="Romero P."/>
            <person name="Gordon D."/>
            <person name="Zhang S."/>
            <person name="Yoo H."/>
            <person name="Tao Y."/>
            <person name="Biddle P."/>
            <person name="Jung M."/>
            <person name="Krespan W."/>
            <person name="Perry M."/>
            <person name="Gordon-Kamm B."/>
            <person name="Liao L."/>
            <person name="Kim S."/>
            <person name="Hendrick C."/>
            <person name="Zhao Z.-Y."/>
            <person name="Dolan M."/>
            <person name="Chumley F."/>
            <person name="Tingey S.V."/>
            <person name="Tomb J.-F."/>
            <person name="Gordon M.P."/>
            <person name="Olson M.V."/>
            <person name="Nester E.W."/>
        </authorList>
    </citation>
    <scope>NUCLEOTIDE SEQUENCE [LARGE SCALE GENOMIC DNA]</scope>
    <source>
        <strain>C58 / ATCC 33970</strain>
    </source>
</reference>
<reference key="2">
    <citation type="journal article" date="2001" name="Science">
        <title>Genome sequence of the plant pathogen and biotechnology agent Agrobacterium tumefaciens C58.</title>
        <authorList>
            <person name="Goodner B."/>
            <person name="Hinkle G."/>
            <person name="Gattung S."/>
            <person name="Miller N."/>
            <person name="Blanchard M."/>
            <person name="Qurollo B."/>
            <person name="Goldman B.S."/>
            <person name="Cao Y."/>
            <person name="Askenazi M."/>
            <person name="Halling C."/>
            <person name="Mullin L."/>
            <person name="Houmiel K."/>
            <person name="Gordon J."/>
            <person name="Vaudin M."/>
            <person name="Iartchouk O."/>
            <person name="Epp A."/>
            <person name="Liu F."/>
            <person name="Wollam C."/>
            <person name="Allinger M."/>
            <person name="Doughty D."/>
            <person name="Scott C."/>
            <person name="Lappas C."/>
            <person name="Markelz B."/>
            <person name="Flanagan C."/>
            <person name="Crowell C."/>
            <person name="Gurson J."/>
            <person name="Lomo C."/>
            <person name="Sear C."/>
            <person name="Strub G."/>
            <person name="Cielo C."/>
            <person name="Slater S."/>
        </authorList>
    </citation>
    <scope>NUCLEOTIDE SEQUENCE [LARGE SCALE GENOMIC DNA]</scope>
    <source>
        <strain>C58 / ATCC 33970</strain>
    </source>
</reference>
<name>FABH_AGRFC</name>
<accession>Q8UG62</accession>